<protein>
    <recommendedName>
        <fullName evidence="1">CinA-like protein</fullName>
    </recommendedName>
</protein>
<sequence length="424" mass="46030">MKLEMICTGEEVLAGQIVDTNAAWFGNTMMEHGIECQRRVTVGDRLEDLVSVFKERSHEADVILVNGGLGPTSDDLSAEAMSLAKGEALVENEIWRERLENWFTRNGRVMALSNLKQAMLPESAIMIDNPVGTACGFAVKLNRAWLFFTPGVPFEFKQMVYEQFIPFVKQRFDIAGDVALRKLLTLGQGESSLADTLEQIDLPSGITIGYRSFMPHIEIKLFARGVGAIAQLDRLEAQIRFLLGNAIVACDRKSLAEEIHSLMVNSGLSLSTAESCTGGMIASQLIDLSGSSSYLDQGLVTYSNESKVRVLGVKPETLDDHGAVSIATVEEMAKGVRSILNSDFALATSGIAGPTGGTDDKPVGTVAIALATKGGVYSQMIKLPRRSRELVRSLSTAVAFDMLRRELLGEAVIVDYGSIGRFQK</sequence>
<evidence type="ECO:0000255" key="1">
    <source>
        <dbReference type="HAMAP-Rule" id="MF_00226"/>
    </source>
</evidence>
<gene>
    <name type="ordered locus">Spea_0223</name>
</gene>
<name>CINAL_SHEPA</name>
<accession>A8GZ14</accession>
<organism>
    <name type="scientific">Shewanella pealeana (strain ATCC 700345 / ANG-SQ1)</name>
    <dbReference type="NCBI Taxonomy" id="398579"/>
    <lineage>
        <taxon>Bacteria</taxon>
        <taxon>Pseudomonadati</taxon>
        <taxon>Pseudomonadota</taxon>
        <taxon>Gammaproteobacteria</taxon>
        <taxon>Alteromonadales</taxon>
        <taxon>Shewanellaceae</taxon>
        <taxon>Shewanella</taxon>
    </lineage>
</organism>
<dbReference type="EMBL" id="CP000851">
    <property type="protein sequence ID" value="ABV85551.1"/>
    <property type="molecule type" value="Genomic_DNA"/>
</dbReference>
<dbReference type="RefSeq" id="WP_012153492.1">
    <property type="nucleotide sequence ID" value="NC_009901.1"/>
</dbReference>
<dbReference type="SMR" id="A8GZ14"/>
<dbReference type="STRING" id="398579.Spea_0223"/>
<dbReference type="KEGG" id="spl:Spea_0223"/>
<dbReference type="eggNOG" id="COG1058">
    <property type="taxonomic scope" value="Bacteria"/>
</dbReference>
<dbReference type="eggNOG" id="COG1546">
    <property type="taxonomic scope" value="Bacteria"/>
</dbReference>
<dbReference type="HOGENOM" id="CLU_030805_9_2_6"/>
<dbReference type="OrthoDB" id="9801454at2"/>
<dbReference type="Proteomes" id="UP000002608">
    <property type="component" value="Chromosome"/>
</dbReference>
<dbReference type="CDD" id="cd00885">
    <property type="entry name" value="cinA"/>
    <property type="match status" value="1"/>
</dbReference>
<dbReference type="Gene3D" id="3.90.950.20">
    <property type="entry name" value="CinA-like"/>
    <property type="match status" value="1"/>
</dbReference>
<dbReference type="Gene3D" id="3.40.980.10">
    <property type="entry name" value="MoaB/Mog-like domain"/>
    <property type="match status" value="1"/>
</dbReference>
<dbReference type="HAMAP" id="MF_00226_B">
    <property type="entry name" value="CinA_B"/>
    <property type="match status" value="1"/>
</dbReference>
<dbReference type="InterPro" id="IPR050101">
    <property type="entry name" value="CinA"/>
</dbReference>
<dbReference type="InterPro" id="IPR036653">
    <property type="entry name" value="CinA-like_C"/>
</dbReference>
<dbReference type="InterPro" id="IPR008136">
    <property type="entry name" value="CinA_C"/>
</dbReference>
<dbReference type="InterPro" id="IPR008135">
    <property type="entry name" value="Competence-induced_CinA"/>
</dbReference>
<dbReference type="InterPro" id="IPR036425">
    <property type="entry name" value="MoaB/Mog-like_dom_sf"/>
</dbReference>
<dbReference type="InterPro" id="IPR001453">
    <property type="entry name" value="MoaB/Mog_dom"/>
</dbReference>
<dbReference type="NCBIfam" id="TIGR00200">
    <property type="entry name" value="cinA_nterm"/>
    <property type="match status" value="1"/>
</dbReference>
<dbReference type="NCBIfam" id="TIGR00199">
    <property type="entry name" value="PncC_domain"/>
    <property type="match status" value="1"/>
</dbReference>
<dbReference type="PANTHER" id="PTHR13939">
    <property type="entry name" value="NICOTINAMIDE-NUCLEOTIDE AMIDOHYDROLASE PNCC"/>
    <property type="match status" value="1"/>
</dbReference>
<dbReference type="PANTHER" id="PTHR13939:SF0">
    <property type="entry name" value="NMN AMIDOHYDROLASE-LIKE PROTEIN YFAY"/>
    <property type="match status" value="1"/>
</dbReference>
<dbReference type="Pfam" id="PF02464">
    <property type="entry name" value="CinA"/>
    <property type="match status" value="1"/>
</dbReference>
<dbReference type="Pfam" id="PF00994">
    <property type="entry name" value="MoCF_biosynth"/>
    <property type="match status" value="1"/>
</dbReference>
<dbReference type="PIRSF" id="PIRSF006728">
    <property type="entry name" value="CinA"/>
    <property type="match status" value="1"/>
</dbReference>
<dbReference type="SMART" id="SM00852">
    <property type="entry name" value="MoCF_biosynth"/>
    <property type="match status" value="1"/>
</dbReference>
<dbReference type="SUPFAM" id="SSF142433">
    <property type="entry name" value="CinA-like"/>
    <property type="match status" value="1"/>
</dbReference>
<dbReference type="SUPFAM" id="SSF53218">
    <property type="entry name" value="Molybdenum cofactor biosynthesis proteins"/>
    <property type="match status" value="1"/>
</dbReference>
<reference key="1">
    <citation type="submission" date="2007-10" db="EMBL/GenBank/DDBJ databases">
        <title>Complete sequence of Shewanella pealeana ATCC 700345.</title>
        <authorList>
            <consortium name="US DOE Joint Genome Institute"/>
            <person name="Copeland A."/>
            <person name="Lucas S."/>
            <person name="Lapidus A."/>
            <person name="Barry K."/>
            <person name="Glavina del Rio T."/>
            <person name="Dalin E."/>
            <person name="Tice H."/>
            <person name="Pitluck S."/>
            <person name="Chertkov O."/>
            <person name="Brettin T."/>
            <person name="Bruce D."/>
            <person name="Detter J.C."/>
            <person name="Han C."/>
            <person name="Schmutz J."/>
            <person name="Larimer F."/>
            <person name="Land M."/>
            <person name="Hauser L."/>
            <person name="Kyrpides N."/>
            <person name="Kim E."/>
            <person name="Zhao J.-S.Z."/>
            <person name="Manno D."/>
            <person name="Hawari J."/>
            <person name="Richardson P."/>
        </authorList>
    </citation>
    <scope>NUCLEOTIDE SEQUENCE [LARGE SCALE GENOMIC DNA]</scope>
    <source>
        <strain>ATCC 700345 / ANG-SQ1</strain>
    </source>
</reference>
<feature type="chain" id="PRO_1000078183" description="CinA-like protein">
    <location>
        <begin position="1"/>
        <end position="424"/>
    </location>
</feature>
<keyword id="KW-1185">Reference proteome</keyword>
<proteinExistence type="inferred from homology"/>
<comment type="similarity">
    <text evidence="1">Belongs to the CinA family.</text>
</comment>